<name>SURE_BRUAB</name>
<proteinExistence type="inferred from homology"/>
<sequence>MRILLTNDDGIHAEGLAVLERIARKLSDDVWVVAPETDQSGLAHSLTLLEPLRLRQIDARHFALRGTPTDCVIMGVRHVLPGAPDLVLSGVNSGANMADDVTYSGTVAGAMEGTLLGVRAIALSQEYEYAGDRRIVPWETAEAHAPELIGRLMEAGWPEGVLLNLNFPNCAPEEVKGVRVTAQGKLSHDARLDERRDGRGFPYFWLHFGRGKAPVADDSDIAAIRSGCISMTPLHLDLTAHKVRAELGAALGVEA</sequence>
<feature type="chain" id="PRO_0000235595" description="5'-nucleotidase SurE">
    <location>
        <begin position="1"/>
        <end position="255"/>
    </location>
</feature>
<feature type="binding site" evidence="1">
    <location>
        <position position="8"/>
    </location>
    <ligand>
        <name>a divalent metal cation</name>
        <dbReference type="ChEBI" id="CHEBI:60240"/>
    </ligand>
</feature>
<feature type="binding site" evidence="1">
    <location>
        <position position="9"/>
    </location>
    <ligand>
        <name>a divalent metal cation</name>
        <dbReference type="ChEBI" id="CHEBI:60240"/>
    </ligand>
</feature>
<feature type="binding site" evidence="1">
    <location>
        <position position="40"/>
    </location>
    <ligand>
        <name>a divalent metal cation</name>
        <dbReference type="ChEBI" id="CHEBI:60240"/>
    </ligand>
</feature>
<feature type="binding site" evidence="1">
    <location>
        <position position="92"/>
    </location>
    <ligand>
        <name>a divalent metal cation</name>
        <dbReference type="ChEBI" id="CHEBI:60240"/>
    </ligand>
</feature>
<comment type="function">
    <text evidence="1">Nucleotidase that shows phosphatase activity on nucleoside 5'-monophosphates.</text>
</comment>
<comment type="catalytic activity">
    <reaction evidence="1">
        <text>a ribonucleoside 5'-phosphate + H2O = a ribonucleoside + phosphate</text>
        <dbReference type="Rhea" id="RHEA:12484"/>
        <dbReference type="ChEBI" id="CHEBI:15377"/>
        <dbReference type="ChEBI" id="CHEBI:18254"/>
        <dbReference type="ChEBI" id="CHEBI:43474"/>
        <dbReference type="ChEBI" id="CHEBI:58043"/>
        <dbReference type="EC" id="3.1.3.5"/>
    </reaction>
</comment>
<comment type="cofactor">
    <cofactor evidence="1">
        <name>a divalent metal cation</name>
        <dbReference type="ChEBI" id="CHEBI:60240"/>
    </cofactor>
    <text evidence="1">Binds 1 divalent metal cation per subunit.</text>
</comment>
<comment type="subcellular location">
    <subcellularLocation>
        <location evidence="1">Cytoplasm</location>
    </subcellularLocation>
</comment>
<comment type="similarity">
    <text evidence="1">Belongs to the SurE nucleotidase family.</text>
</comment>
<keyword id="KW-0963">Cytoplasm</keyword>
<keyword id="KW-0378">Hydrolase</keyword>
<keyword id="KW-0479">Metal-binding</keyword>
<keyword id="KW-0547">Nucleotide-binding</keyword>
<accession>Q57DM1</accession>
<protein>
    <recommendedName>
        <fullName evidence="1">5'-nucleotidase SurE</fullName>
        <ecNumber evidence="1">3.1.3.5</ecNumber>
    </recommendedName>
    <alternativeName>
        <fullName evidence="1">Nucleoside 5'-monophosphate phosphohydrolase</fullName>
    </alternativeName>
</protein>
<gene>
    <name evidence="1" type="primary">surE</name>
    <name type="ordered locus">BruAb1_0898</name>
</gene>
<organism>
    <name type="scientific">Brucella abortus biovar 1 (strain 9-941)</name>
    <dbReference type="NCBI Taxonomy" id="262698"/>
    <lineage>
        <taxon>Bacteria</taxon>
        <taxon>Pseudomonadati</taxon>
        <taxon>Pseudomonadota</taxon>
        <taxon>Alphaproteobacteria</taxon>
        <taxon>Hyphomicrobiales</taxon>
        <taxon>Brucellaceae</taxon>
        <taxon>Brucella/Ochrobactrum group</taxon>
        <taxon>Brucella</taxon>
    </lineage>
</organism>
<reference key="1">
    <citation type="journal article" date="2005" name="J. Bacteriol.">
        <title>Completion of the genome sequence of Brucella abortus and comparison to the highly similar genomes of Brucella melitensis and Brucella suis.</title>
        <authorList>
            <person name="Halling S.M."/>
            <person name="Peterson-Burch B.D."/>
            <person name="Bricker B.J."/>
            <person name="Zuerner R.L."/>
            <person name="Qing Z."/>
            <person name="Li L.-L."/>
            <person name="Kapur V."/>
            <person name="Alt D.P."/>
            <person name="Olsen S.C."/>
        </authorList>
    </citation>
    <scope>NUCLEOTIDE SEQUENCE [LARGE SCALE GENOMIC DNA]</scope>
    <source>
        <strain>9-941</strain>
    </source>
</reference>
<evidence type="ECO:0000255" key="1">
    <source>
        <dbReference type="HAMAP-Rule" id="MF_00060"/>
    </source>
</evidence>
<dbReference type="EC" id="3.1.3.5" evidence="1"/>
<dbReference type="EMBL" id="AE017223">
    <property type="protein sequence ID" value="AAX74263.1"/>
    <property type="molecule type" value="Genomic_DNA"/>
</dbReference>
<dbReference type="RefSeq" id="WP_002966786.1">
    <property type="nucleotide sequence ID" value="NC_006932.1"/>
</dbReference>
<dbReference type="SMR" id="Q57DM1"/>
<dbReference type="EnsemblBacteria" id="AAX74263">
    <property type="protein sequence ID" value="AAX74263"/>
    <property type="gene ID" value="BruAb1_0898"/>
</dbReference>
<dbReference type="GeneID" id="93016736"/>
<dbReference type="KEGG" id="bmb:BruAb1_0898"/>
<dbReference type="HOGENOM" id="CLU_045192_1_2_5"/>
<dbReference type="Proteomes" id="UP000000540">
    <property type="component" value="Chromosome I"/>
</dbReference>
<dbReference type="GO" id="GO:0005737">
    <property type="term" value="C:cytoplasm"/>
    <property type="evidence" value="ECO:0007669"/>
    <property type="project" value="UniProtKB-SubCell"/>
</dbReference>
<dbReference type="GO" id="GO:0008254">
    <property type="term" value="F:3'-nucleotidase activity"/>
    <property type="evidence" value="ECO:0007669"/>
    <property type="project" value="TreeGrafter"/>
</dbReference>
<dbReference type="GO" id="GO:0008253">
    <property type="term" value="F:5'-nucleotidase activity"/>
    <property type="evidence" value="ECO:0007669"/>
    <property type="project" value="UniProtKB-UniRule"/>
</dbReference>
<dbReference type="GO" id="GO:0004309">
    <property type="term" value="F:exopolyphosphatase activity"/>
    <property type="evidence" value="ECO:0007669"/>
    <property type="project" value="TreeGrafter"/>
</dbReference>
<dbReference type="GO" id="GO:0046872">
    <property type="term" value="F:metal ion binding"/>
    <property type="evidence" value="ECO:0007669"/>
    <property type="project" value="UniProtKB-UniRule"/>
</dbReference>
<dbReference type="GO" id="GO:0000166">
    <property type="term" value="F:nucleotide binding"/>
    <property type="evidence" value="ECO:0007669"/>
    <property type="project" value="UniProtKB-KW"/>
</dbReference>
<dbReference type="FunFam" id="3.40.1210.10:FF:000001">
    <property type="entry name" value="5'/3'-nucleotidase SurE"/>
    <property type="match status" value="1"/>
</dbReference>
<dbReference type="Gene3D" id="3.40.1210.10">
    <property type="entry name" value="Survival protein SurE-like phosphatase/nucleotidase"/>
    <property type="match status" value="1"/>
</dbReference>
<dbReference type="HAMAP" id="MF_00060">
    <property type="entry name" value="SurE"/>
    <property type="match status" value="1"/>
</dbReference>
<dbReference type="InterPro" id="IPR030048">
    <property type="entry name" value="SurE"/>
</dbReference>
<dbReference type="InterPro" id="IPR002828">
    <property type="entry name" value="SurE-like_Pase/nucleotidase"/>
</dbReference>
<dbReference type="InterPro" id="IPR036523">
    <property type="entry name" value="SurE-like_sf"/>
</dbReference>
<dbReference type="NCBIfam" id="NF001490">
    <property type="entry name" value="PRK00346.1-4"/>
    <property type="match status" value="1"/>
</dbReference>
<dbReference type="NCBIfam" id="TIGR00087">
    <property type="entry name" value="surE"/>
    <property type="match status" value="1"/>
</dbReference>
<dbReference type="PANTHER" id="PTHR30457">
    <property type="entry name" value="5'-NUCLEOTIDASE SURE"/>
    <property type="match status" value="1"/>
</dbReference>
<dbReference type="PANTHER" id="PTHR30457:SF12">
    <property type="entry name" value="5'_3'-NUCLEOTIDASE SURE"/>
    <property type="match status" value="1"/>
</dbReference>
<dbReference type="Pfam" id="PF01975">
    <property type="entry name" value="SurE"/>
    <property type="match status" value="1"/>
</dbReference>
<dbReference type="SUPFAM" id="SSF64167">
    <property type="entry name" value="SurE-like"/>
    <property type="match status" value="1"/>
</dbReference>